<accession>C1CXJ1</accession>
<name>DNAA_DEIDV</name>
<gene>
    <name evidence="1" type="primary">dnaA</name>
    <name type="ordered locus">Deide_00010</name>
</gene>
<reference key="1">
    <citation type="journal article" date="2009" name="PLoS Genet.">
        <title>Alliance of proteomics and genomics to unravel the specificities of Sahara bacterium Deinococcus deserti.</title>
        <authorList>
            <person name="de Groot A."/>
            <person name="Dulermo R."/>
            <person name="Ortet P."/>
            <person name="Blanchard L."/>
            <person name="Guerin P."/>
            <person name="Fernandez B."/>
            <person name="Vacherie B."/>
            <person name="Dossat C."/>
            <person name="Jolivet E."/>
            <person name="Siguier P."/>
            <person name="Chandler M."/>
            <person name="Barakat M."/>
            <person name="Dedieu A."/>
            <person name="Barbe V."/>
            <person name="Heulin T."/>
            <person name="Sommer S."/>
            <person name="Achouak W."/>
            <person name="Armengaud J."/>
        </authorList>
    </citation>
    <scope>NUCLEOTIDE SEQUENCE [LARGE SCALE GENOMIC DNA]</scope>
    <source>
        <strain>DSM 17065 / CIP 109153 / LMG 22923 / VCD115</strain>
    </source>
</reference>
<keyword id="KW-0067">ATP-binding</keyword>
<keyword id="KW-0963">Cytoplasm</keyword>
<keyword id="KW-0235">DNA replication</keyword>
<keyword id="KW-0238">DNA-binding</keyword>
<keyword id="KW-0446">Lipid-binding</keyword>
<keyword id="KW-0547">Nucleotide-binding</keyword>
<keyword id="KW-1185">Reference proteome</keyword>
<evidence type="ECO:0000255" key="1">
    <source>
        <dbReference type="HAMAP-Rule" id="MF_00377"/>
    </source>
</evidence>
<evidence type="ECO:0000256" key="2">
    <source>
        <dbReference type="SAM" id="MobiDB-lite"/>
    </source>
</evidence>
<sequence length="456" mass="51482">MSQEIWADVLGYVRKNISEVEYHTWFAPLKNLGVQDGSLVLGVRNSFAQEWLRKQYQGLLEDALRSLGAQHPQVSFQVLPASQDALLLPSDPPPAPISPGRAPAPPPADNRKTLNPKYTFENFVVGPNNNLAHAAALAVAESPGKAYNPLFIYGDVGLGKTHLMHAVGHYIAERFPEKRIEYVSTETFTNELINAIREDKTTQFRNRYRSVDLLLVDDIQFLAGKERTQEEFFHTFNALYENHKQIILSSDRPPKDIQTLEGRLRSRFEWGLITDIQSPEFETRVAILKMNAEHNRIDIPQEVLELIARQVTTNIRELEGALMRVVAFSSLNNVPFSRAVASKALSNVFAPQEVKVEMMDVLRQVASHFNMPPDVIRGSGRVREVVVPRQVAQYLIRDLTDHSLPEIGQFFGRDHSTVMHAISKVTEQLGKDSELTAAVETLRRKMKGLEDEDSRA</sequence>
<comment type="function">
    <text evidence="1">Plays an essential role in the initiation and regulation of chromosomal replication. ATP-DnaA binds to the origin of replication (oriC) to initiate formation of the DNA replication initiation complex once per cell cycle. Binds the DnaA box (a 9 base pair repeat at the origin) and separates the double-stranded (ds)DNA. Forms a right-handed helical filament on oriC DNA; dsDNA binds to the exterior of the filament while single-stranded (ss)DNA is stabiized in the filament's interior. The ATP-DnaA-oriC complex binds and stabilizes one strand of the AT-rich DNA unwinding element (DUE), permitting loading of DNA polymerase. After initiation quickly degrades to an ADP-DnaA complex that is not apt for DNA replication. Binds acidic phospholipids.</text>
</comment>
<comment type="subunit">
    <text evidence="1">Oligomerizes as a right-handed, spiral filament on DNA at oriC.</text>
</comment>
<comment type="subcellular location">
    <subcellularLocation>
        <location evidence="1">Cytoplasm</location>
    </subcellularLocation>
</comment>
<comment type="domain">
    <text evidence="1">Domain I is involved in oligomerization and binding regulators, domain II is flexibile and of varying length in different bacteria, domain III forms the AAA+ region, while domain IV binds dsDNA.</text>
</comment>
<comment type="similarity">
    <text evidence="1">Belongs to the DnaA family.</text>
</comment>
<feature type="chain" id="PRO_1000205649" description="Chromosomal replication initiator protein DnaA">
    <location>
        <begin position="1"/>
        <end position="456"/>
    </location>
</feature>
<feature type="region of interest" description="Domain I, interacts with DnaA modulators" evidence="1">
    <location>
        <begin position="1"/>
        <end position="79"/>
    </location>
</feature>
<feature type="region of interest" description="Domain II" evidence="1">
    <location>
        <begin position="79"/>
        <end position="112"/>
    </location>
</feature>
<feature type="region of interest" description="Disordered" evidence="2">
    <location>
        <begin position="89"/>
        <end position="112"/>
    </location>
</feature>
<feature type="region of interest" description="Domain III, AAA+ region" evidence="1">
    <location>
        <begin position="113"/>
        <end position="329"/>
    </location>
</feature>
<feature type="region of interest" description="Domain IV, binds dsDNA" evidence="1">
    <location>
        <begin position="330"/>
        <end position="456"/>
    </location>
</feature>
<feature type="compositionally biased region" description="Pro residues" evidence="2">
    <location>
        <begin position="90"/>
        <end position="108"/>
    </location>
</feature>
<feature type="binding site" evidence="1">
    <location>
        <position position="157"/>
    </location>
    <ligand>
        <name>ATP</name>
        <dbReference type="ChEBI" id="CHEBI:30616"/>
    </ligand>
</feature>
<feature type="binding site" evidence="1">
    <location>
        <position position="159"/>
    </location>
    <ligand>
        <name>ATP</name>
        <dbReference type="ChEBI" id="CHEBI:30616"/>
    </ligand>
</feature>
<feature type="binding site" evidence="1">
    <location>
        <position position="160"/>
    </location>
    <ligand>
        <name>ATP</name>
        <dbReference type="ChEBI" id="CHEBI:30616"/>
    </ligand>
</feature>
<feature type="binding site" evidence="1">
    <location>
        <position position="161"/>
    </location>
    <ligand>
        <name>ATP</name>
        <dbReference type="ChEBI" id="CHEBI:30616"/>
    </ligand>
</feature>
<protein>
    <recommendedName>
        <fullName evidence="1">Chromosomal replication initiator protein DnaA</fullName>
    </recommendedName>
</protein>
<dbReference type="EMBL" id="CP001114">
    <property type="protein sequence ID" value="ACO44797.2"/>
    <property type="molecule type" value="Genomic_DNA"/>
</dbReference>
<dbReference type="RefSeq" id="WP_012691920.1">
    <property type="nucleotide sequence ID" value="NC_012526.1"/>
</dbReference>
<dbReference type="SMR" id="C1CXJ1"/>
<dbReference type="STRING" id="546414.Deide_00010"/>
<dbReference type="PaxDb" id="546414-Deide_00010"/>
<dbReference type="KEGG" id="ddr:Deide_00010"/>
<dbReference type="eggNOG" id="COG0593">
    <property type="taxonomic scope" value="Bacteria"/>
</dbReference>
<dbReference type="HOGENOM" id="CLU_026910_3_1_0"/>
<dbReference type="OrthoDB" id="9807019at2"/>
<dbReference type="Proteomes" id="UP000002208">
    <property type="component" value="Chromosome"/>
</dbReference>
<dbReference type="GO" id="GO:0005737">
    <property type="term" value="C:cytoplasm"/>
    <property type="evidence" value="ECO:0007669"/>
    <property type="project" value="UniProtKB-SubCell"/>
</dbReference>
<dbReference type="GO" id="GO:0005886">
    <property type="term" value="C:plasma membrane"/>
    <property type="evidence" value="ECO:0007669"/>
    <property type="project" value="TreeGrafter"/>
</dbReference>
<dbReference type="GO" id="GO:0005524">
    <property type="term" value="F:ATP binding"/>
    <property type="evidence" value="ECO:0007669"/>
    <property type="project" value="UniProtKB-UniRule"/>
</dbReference>
<dbReference type="GO" id="GO:0016887">
    <property type="term" value="F:ATP hydrolysis activity"/>
    <property type="evidence" value="ECO:0007669"/>
    <property type="project" value="InterPro"/>
</dbReference>
<dbReference type="GO" id="GO:0003688">
    <property type="term" value="F:DNA replication origin binding"/>
    <property type="evidence" value="ECO:0007669"/>
    <property type="project" value="UniProtKB-UniRule"/>
</dbReference>
<dbReference type="GO" id="GO:0008289">
    <property type="term" value="F:lipid binding"/>
    <property type="evidence" value="ECO:0007669"/>
    <property type="project" value="UniProtKB-KW"/>
</dbReference>
<dbReference type="GO" id="GO:0006270">
    <property type="term" value="P:DNA replication initiation"/>
    <property type="evidence" value="ECO:0007669"/>
    <property type="project" value="UniProtKB-UniRule"/>
</dbReference>
<dbReference type="GO" id="GO:0006275">
    <property type="term" value="P:regulation of DNA replication"/>
    <property type="evidence" value="ECO:0007669"/>
    <property type="project" value="UniProtKB-UniRule"/>
</dbReference>
<dbReference type="CDD" id="cd00009">
    <property type="entry name" value="AAA"/>
    <property type="match status" value="1"/>
</dbReference>
<dbReference type="CDD" id="cd06571">
    <property type="entry name" value="Bac_DnaA_C"/>
    <property type="match status" value="1"/>
</dbReference>
<dbReference type="FunFam" id="1.10.8.60:FF:000003">
    <property type="entry name" value="Chromosomal replication initiator protein DnaA"/>
    <property type="match status" value="1"/>
</dbReference>
<dbReference type="FunFam" id="3.40.50.300:FF:000150">
    <property type="entry name" value="Chromosomal replication initiator protein DnaA"/>
    <property type="match status" value="1"/>
</dbReference>
<dbReference type="Gene3D" id="1.10.1750.10">
    <property type="match status" value="1"/>
</dbReference>
<dbReference type="Gene3D" id="1.10.8.60">
    <property type="match status" value="1"/>
</dbReference>
<dbReference type="Gene3D" id="3.30.300.180">
    <property type="match status" value="1"/>
</dbReference>
<dbReference type="Gene3D" id="3.40.50.300">
    <property type="entry name" value="P-loop containing nucleotide triphosphate hydrolases"/>
    <property type="match status" value="1"/>
</dbReference>
<dbReference type="HAMAP" id="MF_00377">
    <property type="entry name" value="DnaA_bact"/>
    <property type="match status" value="1"/>
</dbReference>
<dbReference type="InterPro" id="IPR003593">
    <property type="entry name" value="AAA+_ATPase"/>
</dbReference>
<dbReference type="InterPro" id="IPR001957">
    <property type="entry name" value="Chromosome_initiator_DnaA"/>
</dbReference>
<dbReference type="InterPro" id="IPR020591">
    <property type="entry name" value="Chromosome_initiator_DnaA-like"/>
</dbReference>
<dbReference type="InterPro" id="IPR018312">
    <property type="entry name" value="Chromosome_initiator_DnaA_CS"/>
</dbReference>
<dbReference type="InterPro" id="IPR013159">
    <property type="entry name" value="DnaA_C"/>
</dbReference>
<dbReference type="InterPro" id="IPR013317">
    <property type="entry name" value="DnaA_dom"/>
</dbReference>
<dbReference type="InterPro" id="IPR024633">
    <property type="entry name" value="DnaA_N_dom"/>
</dbReference>
<dbReference type="InterPro" id="IPR038454">
    <property type="entry name" value="DnaA_N_sf"/>
</dbReference>
<dbReference type="InterPro" id="IPR027417">
    <property type="entry name" value="P-loop_NTPase"/>
</dbReference>
<dbReference type="InterPro" id="IPR010921">
    <property type="entry name" value="Trp_repressor/repl_initiator"/>
</dbReference>
<dbReference type="NCBIfam" id="TIGR00362">
    <property type="entry name" value="DnaA"/>
    <property type="match status" value="1"/>
</dbReference>
<dbReference type="PANTHER" id="PTHR30050">
    <property type="entry name" value="CHROMOSOMAL REPLICATION INITIATOR PROTEIN DNAA"/>
    <property type="match status" value="1"/>
</dbReference>
<dbReference type="PANTHER" id="PTHR30050:SF2">
    <property type="entry name" value="CHROMOSOMAL REPLICATION INITIATOR PROTEIN DNAA"/>
    <property type="match status" value="1"/>
</dbReference>
<dbReference type="Pfam" id="PF00308">
    <property type="entry name" value="Bac_DnaA"/>
    <property type="match status" value="1"/>
</dbReference>
<dbReference type="Pfam" id="PF08299">
    <property type="entry name" value="Bac_DnaA_C"/>
    <property type="match status" value="1"/>
</dbReference>
<dbReference type="Pfam" id="PF11638">
    <property type="entry name" value="DnaA_N"/>
    <property type="match status" value="1"/>
</dbReference>
<dbReference type="PRINTS" id="PR00051">
    <property type="entry name" value="DNAA"/>
</dbReference>
<dbReference type="SMART" id="SM00382">
    <property type="entry name" value="AAA"/>
    <property type="match status" value="1"/>
</dbReference>
<dbReference type="SMART" id="SM00760">
    <property type="entry name" value="Bac_DnaA_C"/>
    <property type="match status" value="1"/>
</dbReference>
<dbReference type="SUPFAM" id="SSF52540">
    <property type="entry name" value="P-loop containing nucleoside triphosphate hydrolases"/>
    <property type="match status" value="1"/>
</dbReference>
<dbReference type="SUPFAM" id="SSF48295">
    <property type="entry name" value="TrpR-like"/>
    <property type="match status" value="1"/>
</dbReference>
<dbReference type="PROSITE" id="PS01008">
    <property type="entry name" value="DNAA"/>
    <property type="match status" value="1"/>
</dbReference>
<organism>
    <name type="scientific">Deinococcus deserti (strain DSM 17065 / CIP 109153 / LMG 22923 / VCD115)</name>
    <dbReference type="NCBI Taxonomy" id="546414"/>
    <lineage>
        <taxon>Bacteria</taxon>
        <taxon>Thermotogati</taxon>
        <taxon>Deinococcota</taxon>
        <taxon>Deinococci</taxon>
        <taxon>Deinococcales</taxon>
        <taxon>Deinococcaceae</taxon>
        <taxon>Deinococcus</taxon>
    </lineage>
</organism>
<proteinExistence type="inferred from homology"/>